<proteinExistence type="inferred from homology"/>
<sequence>MFGRNFPFFNSIGGFYPRESLDSKRPSGTGYTSKVRVRDKYHIVGFISSGTYGRVYKAIGKDGRKGEYAIKKFKPDKEGEIIQYTGLSQSAIREMALCSELDHPNVVQLAEIILEDKCIFMVFEYTEHDLLQIIHHHTQPQRHAIPAPMIKSILFQLLNGLLYLHTNWVLHRDLKPANILVTSSGAVRIGDLGLARLFYKPLNSLYSGDKVVVTIWYRAPELLMGSRHYTPAVDLWAVGCIFAELLSLRPIFKGEEAKMDSKKTVPFQRNQMMKIIDIMGLPRKETWPGLVSMPEFSQLQSLAMSRGYLNRQCNLEGWYQSCLKNNGYSPGSAAGTPGAEGFDLLSRLLEYDPTKRISAREALEHPYFTTGTPVTANCFAGYEGKYPHRRVTQDDNDIRSGSLPGTKRSGLPDDSLMGRAAKRLKE</sequence>
<name>SSN3_NEOFI</name>
<keyword id="KW-0010">Activator</keyword>
<keyword id="KW-0067">ATP-binding</keyword>
<keyword id="KW-0418">Kinase</keyword>
<keyword id="KW-0460">Magnesium</keyword>
<keyword id="KW-0479">Metal-binding</keyword>
<keyword id="KW-0547">Nucleotide-binding</keyword>
<keyword id="KW-0539">Nucleus</keyword>
<keyword id="KW-1185">Reference proteome</keyword>
<keyword id="KW-0678">Repressor</keyword>
<keyword id="KW-0723">Serine/threonine-protein kinase</keyword>
<keyword id="KW-0804">Transcription</keyword>
<keyword id="KW-0805">Transcription regulation</keyword>
<keyword id="KW-0808">Transferase</keyword>
<reference key="1">
    <citation type="journal article" date="2008" name="PLoS Genet.">
        <title>Genomic islands in the pathogenic filamentous fungus Aspergillus fumigatus.</title>
        <authorList>
            <person name="Fedorova N.D."/>
            <person name="Khaldi N."/>
            <person name="Joardar V.S."/>
            <person name="Maiti R."/>
            <person name="Amedeo P."/>
            <person name="Anderson M.J."/>
            <person name="Crabtree J."/>
            <person name="Silva J.C."/>
            <person name="Badger J.H."/>
            <person name="Albarraq A."/>
            <person name="Angiuoli S."/>
            <person name="Bussey H."/>
            <person name="Bowyer P."/>
            <person name="Cotty P.J."/>
            <person name="Dyer P.S."/>
            <person name="Egan A."/>
            <person name="Galens K."/>
            <person name="Fraser-Liggett C.M."/>
            <person name="Haas B.J."/>
            <person name="Inman J.M."/>
            <person name="Kent R."/>
            <person name="Lemieux S."/>
            <person name="Malavazi I."/>
            <person name="Orvis J."/>
            <person name="Roemer T."/>
            <person name="Ronning C.M."/>
            <person name="Sundaram J.P."/>
            <person name="Sutton G."/>
            <person name="Turner G."/>
            <person name="Venter J.C."/>
            <person name="White O.R."/>
            <person name="Whitty B.R."/>
            <person name="Youngman P."/>
            <person name="Wolfe K.H."/>
            <person name="Goldman G.H."/>
            <person name="Wortman J.R."/>
            <person name="Jiang B."/>
            <person name="Denning D.W."/>
            <person name="Nierman W.C."/>
        </authorList>
    </citation>
    <scope>NUCLEOTIDE SEQUENCE [LARGE SCALE GENOMIC DNA]</scope>
    <source>
        <strain>ATCC 1020 / DSM 3700 / CBS 544.65 / FGSC A1164 / JCM 1740 / NRRL 181 / WB 181</strain>
    </source>
</reference>
<comment type="function">
    <text evidence="1">Component of the srb8-11 complex. The srb8-11 complex is a regulatory module of the Mediator complex which is itself dependent transcription. The srb8-11 complex may be involved in the transcriptional repression of a subset of genes regulated by Mediator. It may inhibit the association of the Mediator complex with RNA polymerase II to form the holoenzyme complex. The srb8-11 complex phosphorylates the C-terminal domain (CTD) of the largest subunit of RNA polymerase II (By similarity).</text>
</comment>
<comment type="catalytic activity">
    <reaction>
        <text>L-seryl-[protein] + ATP = O-phospho-L-seryl-[protein] + ADP + H(+)</text>
        <dbReference type="Rhea" id="RHEA:17989"/>
        <dbReference type="Rhea" id="RHEA-COMP:9863"/>
        <dbReference type="Rhea" id="RHEA-COMP:11604"/>
        <dbReference type="ChEBI" id="CHEBI:15378"/>
        <dbReference type="ChEBI" id="CHEBI:29999"/>
        <dbReference type="ChEBI" id="CHEBI:30616"/>
        <dbReference type="ChEBI" id="CHEBI:83421"/>
        <dbReference type="ChEBI" id="CHEBI:456216"/>
        <dbReference type="EC" id="2.7.11.22"/>
    </reaction>
</comment>
<comment type="catalytic activity">
    <reaction>
        <text>L-threonyl-[protein] + ATP = O-phospho-L-threonyl-[protein] + ADP + H(+)</text>
        <dbReference type="Rhea" id="RHEA:46608"/>
        <dbReference type="Rhea" id="RHEA-COMP:11060"/>
        <dbReference type="Rhea" id="RHEA-COMP:11605"/>
        <dbReference type="ChEBI" id="CHEBI:15378"/>
        <dbReference type="ChEBI" id="CHEBI:30013"/>
        <dbReference type="ChEBI" id="CHEBI:30616"/>
        <dbReference type="ChEBI" id="CHEBI:61977"/>
        <dbReference type="ChEBI" id="CHEBI:456216"/>
        <dbReference type="EC" id="2.7.11.22"/>
    </reaction>
</comment>
<comment type="catalytic activity">
    <reaction>
        <text>[DNA-directed RNA polymerase] + ATP = phospho-[DNA-directed RNA polymerase] + ADP + H(+)</text>
        <dbReference type="Rhea" id="RHEA:10216"/>
        <dbReference type="Rhea" id="RHEA-COMP:11321"/>
        <dbReference type="Rhea" id="RHEA-COMP:11322"/>
        <dbReference type="ChEBI" id="CHEBI:15378"/>
        <dbReference type="ChEBI" id="CHEBI:30616"/>
        <dbReference type="ChEBI" id="CHEBI:43176"/>
        <dbReference type="ChEBI" id="CHEBI:68546"/>
        <dbReference type="ChEBI" id="CHEBI:456216"/>
        <dbReference type="EC" id="2.7.11.23"/>
    </reaction>
</comment>
<comment type="cofactor">
    <cofactor evidence="1">
        <name>Mg(2+)</name>
        <dbReference type="ChEBI" id="CHEBI:18420"/>
    </cofactor>
</comment>
<comment type="subunit">
    <text evidence="1">Component of the srb8-11 complex, a regulatory module of the Mediator complex.</text>
</comment>
<comment type="subcellular location">
    <subcellularLocation>
        <location evidence="5">Nucleus</location>
    </subcellularLocation>
</comment>
<comment type="similarity">
    <text evidence="5">Belongs to the protein kinase superfamily. CMGC Ser/Thr protein kinase family. CDC2/CDKX subfamily.</text>
</comment>
<gene>
    <name type="primary">ssn3</name>
    <name type="synonym">cdk8</name>
    <name type="ORF">NFIA_063290</name>
</gene>
<accession>A1D624</accession>
<evidence type="ECO:0000250" key="1"/>
<evidence type="ECO:0000255" key="2">
    <source>
        <dbReference type="PROSITE-ProRule" id="PRU00159"/>
    </source>
</evidence>
<evidence type="ECO:0000255" key="3">
    <source>
        <dbReference type="PROSITE-ProRule" id="PRU10027"/>
    </source>
</evidence>
<evidence type="ECO:0000256" key="4">
    <source>
        <dbReference type="SAM" id="MobiDB-lite"/>
    </source>
</evidence>
<evidence type="ECO:0000305" key="5"/>
<dbReference type="EC" id="2.7.11.22"/>
<dbReference type="EC" id="2.7.11.23"/>
<dbReference type="EMBL" id="DS027690">
    <property type="protein sequence ID" value="EAW21168.1"/>
    <property type="molecule type" value="Genomic_DNA"/>
</dbReference>
<dbReference type="RefSeq" id="XP_001263065.1">
    <property type="nucleotide sequence ID" value="XM_001263064.1"/>
</dbReference>
<dbReference type="SMR" id="A1D624"/>
<dbReference type="STRING" id="331117.A1D624"/>
<dbReference type="EnsemblFungi" id="EAW21168">
    <property type="protein sequence ID" value="EAW21168"/>
    <property type="gene ID" value="NFIA_063290"/>
</dbReference>
<dbReference type="GeneID" id="4589549"/>
<dbReference type="KEGG" id="nfi:NFIA_063290"/>
<dbReference type="VEuPathDB" id="FungiDB:NFIA_063290"/>
<dbReference type="eggNOG" id="KOG0666">
    <property type="taxonomic scope" value="Eukaryota"/>
</dbReference>
<dbReference type="HOGENOM" id="CLU_000288_181_6_1"/>
<dbReference type="OMA" id="YFKNGGP"/>
<dbReference type="OrthoDB" id="6284126at2759"/>
<dbReference type="Proteomes" id="UP000006702">
    <property type="component" value="Unassembled WGS sequence"/>
</dbReference>
<dbReference type="GO" id="GO:1990508">
    <property type="term" value="C:CKM complex"/>
    <property type="evidence" value="ECO:0007669"/>
    <property type="project" value="EnsemblFungi"/>
</dbReference>
<dbReference type="GO" id="GO:0016592">
    <property type="term" value="C:mediator complex"/>
    <property type="evidence" value="ECO:0007669"/>
    <property type="project" value="EnsemblFungi"/>
</dbReference>
<dbReference type="GO" id="GO:0005524">
    <property type="term" value="F:ATP binding"/>
    <property type="evidence" value="ECO:0007669"/>
    <property type="project" value="UniProtKB-KW"/>
</dbReference>
<dbReference type="GO" id="GO:0004693">
    <property type="term" value="F:cyclin-dependent protein serine/threonine kinase activity"/>
    <property type="evidence" value="ECO:0007669"/>
    <property type="project" value="UniProtKB-EC"/>
</dbReference>
<dbReference type="GO" id="GO:0046872">
    <property type="term" value="F:metal ion binding"/>
    <property type="evidence" value="ECO:0007669"/>
    <property type="project" value="UniProtKB-KW"/>
</dbReference>
<dbReference type="GO" id="GO:0106310">
    <property type="term" value="F:protein serine kinase activity"/>
    <property type="evidence" value="ECO:0007669"/>
    <property type="project" value="RHEA"/>
</dbReference>
<dbReference type="GO" id="GO:0008353">
    <property type="term" value="F:RNA polymerase II CTD heptapeptide repeat kinase activity"/>
    <property type="evidence" value="ECO:0007669"/>
    <property type="project" value="UniProtKB-EC"/>
</dbReference>
<dbReference type="GO" id="GO:0060258">
    <property type="term" value="P:negative regulation of filamentous growth"/>
    <property type="evidence" value="ECO:0007669"/>
    <property type="project" value="EnsemblFungi"/>
</dbReference>
<dbReference type="GO" id="GO:0000122">
    <property type="term" value="P:negative regulation of transcription by RNA polymerase II"/>
    <property type="evidence" value="ECO:0007669"/>
    <property type="project" value="EnsemblFungi"/>
</dbReference>
<dbReference type="GO" id="GO:0070481">
    <property type="term" value="P:nuclear-transcribed mRNA catabolic process, non-stop decay"/>
    <property type="evidence" value="ECO:0007669"/>
    <property type="project" value="EnsemblFungi"/>
</dbReference>
<dbReference type="GO" id="GO:0045944">
    <property type="term" value="P:positive regulation of transcription by RNA polymerase II"/>
    <property type="evidence" value="ECO:0007669"/>
    <property type="project" value="EnsemblFungi"/>
</dbReference>
<dbReference type="GO" id="GO:0031648">
    <property type="term" value="P:protein destabilization"/>
    <property type="evidence" value="ECO:0007669"/>
    <property type="project" value="EnsemblFungi"/>
</dbReference>
<dbReference type="CDD" id="cd07842">
    <property type="entry name" value="STKc_CDK8_like"/>
    <property type="match status" value="1"/>
</dbReference>
<dbReference type="FunFam" id="1.10.510.10:FF:000408">
    <property type="entry name" value="Serine/threonine-protein kinase SSN3"/>
    <property type="match status" value="1"/>
</dbReference>
<dbReference type="FunFam" id="3.30.200.20:FF:000426">
    <property type="entry name" value="Serine/threonine-protein kinase ssn3"/>
    <property type="match status" value="1"/>
</dbReference>
<dbReference type="Gene3D" id="3.30.200.20">
    <property type="entry name" value="Phosphorylase Kinase, domain 1"/>
    <property type="match status" value="1"/>
</dbReference>
<dbReference type="Gene3D" id="1.10.510.10">
    <property type="entry name" value="Transferase(Phosphotransferase) domain 1"/>
    <property type="match status" value="1"/>
</dbReference>
<dbReference type="InterPro" id="IPR050108">
    <property type="entry name" value="CDK"/>
</dbReference>
<dbReference type="InterPro" id="IPR011009">
    <property type="entry name" value="Kinase-like_dom_sf"/>
</dbReference>
<dbReference type="InterPro" id="IPR000719">
    <property type="entry name" value="Prot_kinase_dom"/>
</dbReference>
<dbReference type="InterPro" id="IPR008271">
    <property type="entry name" value="Ser/Thr_kinase_AS"/>
</dbReference>
<dbReference type="PANTHER" id="PTHR24056">
    <property type="entry name" value="CELL DIVISION PROTEIN KINASE"/>
    <property type="match status" value="1"/>
</dbReference>
<dbReference type="PANTHER" id="PTHR24056:SF495">
    <property type="entry name" value="CYCLIN-DEPENDENT KINASE 8-RELATED"/>
    <property type="match status" value="1"/>
</dbReference>
<dbReference type="Pfam" id="PF00069">
    <property type="entry name" value="Pkinase"/>
    <property type="match status" value="1"/>
</dbReference>
<dbReference type="SMART" id="SM00220">
    <property type="entry name" value="S_TKc"/>
    <property type="match status" value="1"/>
</dbReference>
<dbReference type="SUPFAM" id="SSF56112">
    <property type="entry name" value="Protein kinase-like (PK-like)"/>
    <property type="match status" value="1"/>
</dbReference>
<dbReference type="PROSITE" id="PS50011">
    <property type="entry name" value="PROTEIN_KINASE_DOM"/>
    <property type="match status" value="1"/>
</dbReference>
<dbReference type="PROSITE" id="PS00108">
    <property type="entry name" value="PROTEIN_KINASE_ST"/>
    <property type="match status" value="1"/>
</dbReference>
<organism>
    <name type="scientific">Neosartorya fischeri (strain ATCC 1020 / DSM 3700 / CBS 544.65 / FGSC A1164 / JCM 1740 / NRRL 181 / WB 181)</name>
    <name type="common">Aspergillus fischerianus</name>
    <dbReference type="NCBI Taxonomy" id="331117"/>
    <lineage>
        <taxon>Eukaryota</taxon>
        <taxon>Fungi</taxon>
        <taxon>Dikarya</taxon>
        <taxon>Ascomycota</taxon>
        <taxon>Pezizomycotina</taxon>
        <taxon>Eurotiomycetes</taxon>
        <taxon>Eurotiomycetidae</taxon>
        <taxon>Eurotiales</taxon>
        <taxon>Aspergillaceae</taxon>
        <taxon>Aspergillus</taxon>
        <taxon>Aspergillus subgen. Fumigati</taxon>
    </lineage>
</organism>
<feature type="chain" id="PRO_0000312948" description="Serine/threonine-protein kinase ssn3">
    <location>
        <begin position="1"/>
        <end position="426"/>
    </location>
</feature>
<feature type="domain" description="Protein kinase" evidence="2">
    <location>
        <begin position="41"/>
        <end position="368"/>
    </location>
</feature>
<feature type="region of interest" description="Disordered" evidence="4">
    <location>
        <begin position="390"/>
        <end position="426"/>
    </location>
</feature>
<feature type="active site" description="Proton acceptor" evidence="2 3">
    <location>
        <position position="173"/>
    </location>
</feature>
<feature type="binding site" evidence="2">
    <location>
        <begin position="47"/>
        <end position="55"/>
    </location>
    <ligand>
        <name>ATP</name>
        <dbReference type="ChEBI" id="CHEBI:30616"/>
    </ligand>
</feature>
<feature type="binding site" evidence="2">
    <location>
        <position position="71"/>
    </location>
    <ligand>
        <name>ATP</name>
        <dbReference type="ChEBI" id="CHEBI:30616"/>
    </ligand>
</feature>
<protein>
    <recommendedName>
        <fullName>Serine/threonine-protein kinase ssn3</fullName>
        <ecNumber>2.7.11.22</ecNumber>
        <ecNumber>2.7.11.23</ecNumber>
    </recommendedName>
    <alternativeName>
        <fullName>Cyclin-dependent kinase 8</fullName>
    </alternativeName>
</protein>